<reference key="1">
    <citation type="journal article" date="2012" name="Environ. Microbiol.">
        <title>The genome sequence of Desulfatibacillum alkenivorans AK-01: a blueprint for anaerobic alkane oxidation.</title>
        <authorList>
            <person name="Callaghan A.V."/>
            <person name="Morris B.E."/>
            <person name="Pereira I.A."/>
            <person name="McInerney M.J."/>
            <person name="Austin R.N."/>
            <person name="Groves J.T."/>
            <person name="Kukor J.J."/>
            <person name="Suflita J.M."/>
            <person name="Young L.Y."/>
            <person name="Zylstra G.J."/>
            <person name="Wawrik B."/>
        </authorList>
    </citation>
    <scope>NUCLEOTIDE SEQUENCE [LARGE SCALE GENOMIC DNA]</scope>
    <source>
        <strain>AK-01</strain>
    </source>
</reference>
<proteinExistence type="inferred from homology"/>
<dbReference type="EMBL" id="CP001322">
    <property type="protein sequence ID" value="ACL03609.1"/>
    <property type="molecule type" value="Genomic_DNA"/>
</dbReference>
<dbReference type="RefSeq" id="WP_012611040.1">
    <property type="nucleotide sequence ID" value="NC_011768.1"/>
</dbReference>
<dbReference type="SMR" id="B8FET2"/>
<dbReference type="KEGG" id="dal:Dalk_1912"/>
<dbReference type="eggNOG" id="COG0090">
    <property type="taxonomic scope" value="Bacteria"/>
</dbReference>
<dbReference type="HOGENOM" id="CLU_036235_2_1_7"/>
<dbReference type="Proteomes" id="UP000000739">
    <property type="component" value="Chromosome"/>
</dbReference>
<dbReference type="GO" id="GO:0015934">
    <property type="term" value="C:large ribosomal subunit"/>
    <property type="evidence" value="ECO:0007669"/>
    <property type="project" value="InterPro"/>
</dbReference>
<dbReference type="GO" id="GO:0019843">
    <property type="term" value="F:rRNA binding"/>
    <property type="evidence" value="ECO:0007669"/>
    <property type="project" value="UniProtKB-UniRule"/>
</dbReference>
<dbReference type="GO" id="GO:0003735">
    <property type="term" value="F:structural constituent of ribosome"/>
    <property type="evidence" value="ECO:0007669"/>
    <property type="project" value="InterPro"/>
</dbReference>
<dbReference type="GO" id="GO:0016740">
    <property type="term" value="F:transferase activity"/>
    <property type="evidence" value="ECO:0007669"/>
    <property type="project" value="InterPro"/>
</dbReference>
<dbReference type="GO" id="GO:0002181">
    <property type="term" value="P:cytoplasmic translation"/>
    <property type="evidence" value="ECO:0007669"/>
    <property type="project" value="TreeGrafter"/>
</dbReference>
<dbReference type="FunFam" id="2.30.30.30:FF:000001">
    <property type="entry name" value="50S ribosomal protein L2"/>
    <property type="match status" value="1"/>
</dbReference>
<dbReference type="FunFam" id="2.40.50.140:FF:000003">
    <property type="entry name" value="50S ribosomal protein L2"/>
    <property type="match status" value="1"/>
</dbReference>
<dbReference type="FunFam" id="4.10.950.10:FF:000001">
    <property type="entry name" value="50S ribosomal protein L2"/>
    <property type="match status" value="1"/>
</dbReference>
<dbReference type="Gene3D" id="2.30.30.30">
    <property type="match status" value="1"/>
</dbReference>
<dbReference type="Gene3D" id="2.40.50.140">
    <property type="entry name" value="Nucleic acid-binding proteins"/>
    <property type="match status" value="1"/>
</dbReference>
<dbReference type="Gene3D" id="4.10.950.10">
    <property type="entry name" value="Ribosomal protein L2, domain 3"/>
    <property type="match status" value="1"/>
</dbReference>
<dbReference type="HAMAP" id="MF_01320_B">
    <property type="entry name" value="Ribosomal_uL2_B"/>
    <property type="match status" value="1"/>
</dbReference>
<dbReference type="InterPro" id="IPR012340">
    <property type="entry name" value="NA-bd_OB-fold"/>
</dbReference>
<dbReference type="InterPro" id="IPR014722">
    <property type="entry name" value="Rib_uL2_dom2"/>
</dbReference>
<dbReference type="InterPro" id="IPR002171">
    <property type="entry name" value="Ribosomal_uL2"/>
</dbReference>
<dbReference type="InterPro" id="IPR005880">
    <property type="entry name" value="Ribosomal_uL2_bac/org-type"/>
</dbReference>
<dbReference type="InterPro" id="IPR022669">
    <property type="entry name" value="Ribosomal_uL2_C"/>
</dbReference>
<dbReference type="InterPro" id="IPR022671">
    <property type="entry name" value="Ribosomal_uL2_CS"/>
</dbReference>
<dbReference type="InterPro" id="IPR014726">
    <property type="entry name" value="Ribosomal_uL2_dom3"/>
</dbReference>
<dbReference type="InterPro" id="IPR022666">
    <property type="entry name" value="Ribosomal_uL2_RNA-bd_dom"/>
</dbReference>
<dbReference type="InterPro" id="IPR008991">
    <property type="entry name" value="Translation_prot_SH3-like_sf"/>
</dbReference>
<dbReference type="NCBIfam" id="TIGR01171">
    <property type="entry name" value="rplB_bact"/>
    <property type="match status" value="1"/>
</dbReference>
<dbReference type="PANTHER" id="PTHR13691:SF5">
    <property type="entry name" value="LARGE RIBOSOMAL SUBUNIT PROTEIN UL2M"/>
    <property type="match status" value="1"/>
</dbReference>
<dbReference type="PANTHER" id="PTHR13691">
    <property type="entry name" value="RIBOSOMAL PROTEIN L2"/>
    <property type="match status" value="1"/>
</dbReference>
<dbReference type="Pfam" id="PF00181">
    <property type="entry name" value="Ribosomal_L2"/>
    <property type="match status" value="1"/>
</dbReference>
<dbReference type="Pfam" id="PF03947">
    <property type="entry name" value="Ribosomal_L2_C"/>
    <property type="match status" value="1"/>
</dbReference>
<dbReference type="PIRSF" id="PIRSF002158">
    <property type="entry name" value="Ribosomal_L2"/>
    <property type="match status" value="1"/>
</dbReference>
<dbReference type="SMART" id="SM01383">
    <property type="entry name" value="Ribosomal_L2"/>
    <property type="match status" value="1"/>
</dbReference>
<dbReference type="SMART" id="SM01382">
    <property type="entry name" value="Ribosomal_L2_C"/>
    <property type="match status" value="1"/>
</dbReference>
<dbReference type="SUPFAM" id="SSF50249">
    <property type="entry name" value="Nucleic acid-binding proteins"/>
    <property type="match status" value="1"/>
</dbReference>
<dbReference type="SUPFAM" id="SSF50104">
    <property type="entry name" value="Translation proteins SH3-like domain"/>
    <property type="match status" value="1"/>
</dbReference>
<dbReference type="PROSITE" id="PS00467">
    <property type="entry name" value="RIBOSOMAL_L2"/>
    <property type="match status" value="1"/>
</dbReference>
<keyword id="KW-1185">Reference proteome</keyword>
<keyword id="KW-0687">Ribonucleoprotein</keyword>
<keyword id="KW-0689">Ribosomal protein</keyword>
<keyword id="KW-0694">RNA-binding</keyword>
<keyword id="KW-0699">rRNA-binding</keyword>
<organism>
    <name type="scientific">Desulfatibacillum aliphaticivorans</name>
    <dbReference type="NCBI Taxonomy" id="218208"/>
    <lineage>
        <taxon>Bacteria</taxon>
        <taxon>Pseudomonadati</taxon>
        <taxon>Thermodesulfobacteriota</taxon>
        <taxon>Desulfobacteria</taxon>
        <taxon>Desulfobacterales</taxon>
        <taxon>Desulfatibacillaceae</taxon>
        <taxon>Desulfatibacillum</taxon>
    </lineage>
</organism>
<protein>
    <recommendedName>
        <fullName evidence="1">Large ribosomal subunit protein uL2</fullName>
    </recommendedName>
    <alternativeName>
        <fullName evidence="3">50S ribosomal protein L2</fullName>
    </alternativeName>
</protein>
<name>RL2_DESAL</name>
<evidence type="ECO:0000255" key="1">
    <source>
        <dbReference type="HAMAP-Rule" id="MF_01320"/>
    </source>
</evidence>
<evidence type="ECO:0000256" key="2">
    <source>
        <dbReference type="SAM" id="MobiDB-lite"/>
    </source>
</evidence>
<evidence type="ECO:0000305" key="3"/>
<accession>B8FET2</accession>
<gene>
    <name evidence="1" type="primary">rplB</name>
    <name type="ordered locus">Dalk_1912</name>
</gene>
<sequence>MAVRKTKPTSPGRRFQEFGTFEEITKKKPEKSLIKVVKKSGGRNANGRVTCRHRGGGSRRQLRIVDFKRNKTGIPAKVAAIEYDPNRGARLALLHYVDGEKRYIIAPVNLTVGDMVESGPEADIKPGNALPLNNIPLGTQIHNIELKVGKGGQVVRGAGTFAQLVAKEGKYAQVRLPSGEVRLVLLKCMATIGQVGNVEHENLALGKAGRKRWLGRRPSVRGVAMNPVDHPMGGGEGRSSGGRHPCSPWGMPTKGYKTRKNKTTDKFIVRKRNKR</sequence>
<comment type="function">
    <text evidence="1">One of the primary rRNA binding proteins. Required for association of the 30S and 50S subunits to form the 70S ribosome, for tRNA binding and peptide bond formation. It has been suggested to have peptidyltransferase activity; this is somewhat controversial. Makes several contacts with the 16S rRNA in the 70S ribosome.</text>
</comment>
<comment type="subunit">
    <text evidence="1">Part of the 50S ribosomal subunit. Forms a bridge to the 30S subunit in the 70S ribosome.</text>
</comment>
<comment type="similarity">
    <text evidence="1">Belongs to the universal ribosomal protein uL2 family.</text>
</comment>
<feature type="chain" id="PRO_1000141537" description="Large ribosomal subunit protein uL2">
    <location>
        <begin position="1"/>
        <end position="275"/>
    </location>
</feature>
<feature type="region of interest" description="Disordered" evidence="2">
    <location>
        <begin position="222"/>
        <end position="275"/>
    </location>
</feature>